<keyword id="KW-0167">Capsid protein</keyword>
<keyword id="KW-0903">Direct protein sequencing</keyword>
<keyword id="KW-0694">RNA-binding</keyword>
<keyword id="KW-1142">T=3 icosahedral capsid protein</keyword>
<keyword id="KW-0810">Translation regulation</keyword>
<keyword id="KW-0946">Virion</keyword>
<comment type="function">
    <text evidence="1">Capsid protein self-assembles to form an icosahedral capsid with a T=3 symmetry, about 26 nm in diameter, and consisting of 89 capsid proteins dimers (178 capsid proteins). Involved in viral genome encapsidation through the interaction between a capsid protein dimer and the multiple packaging signals present in the RNA genome. The capsid also contains 1 copy of the A2 maturation protein.</text>
</comment>
<comment type="function">
    <text evidence="1">Acts as a translational repressor of viral replicase synthesis late in infection. This latter function is the result of capsid protein interaction with an RNA hairpin which contains the replicase ribosome-binding site.</text>
</comment>
<comment type="subunit">
    <text evidence="1">Homodimer. The capsid proteins form dimers that assemble by group of 5. Twelve such pentamers are linked together with free dimers. The homodimers binds to the viral RNA via an operator hairpin, but also to many other RNA sequences in the viral genome; this interaction probably shifts the virus from the replicative to the assembly phase and ensures specific encapsidation of the viral genome.</text>
</comment>
<comment type="subcellular location">
    <subcellularLocation>
        <location evidence="1">Virion</location>
    </subcellularLocation>
    <text evidence="1">The shell is composed of 178 copies of the capsid protein and 1 copy of the maturation protein.</text>
</comment>
<comment type="similarity">
    <text evidence="2">Belongs to the Leviviricetes capsid protein family.</text>
</comment>
<evidence type="ECO:0000250" key="1">
    <source>
        <dbReference type="UniProtKB" id="P03612"/>
    </source>
</evidence>
<evidence type="ECO:0000305" key="2"/>
<dbReference type="EMBL" id="M24832">
    <property type="protein sequence ID" value="AAA32227.1"/>
    <property type="molecule type" value="Genomic_RNA"/>
</dbReference>
<dbReference type="PIR" id="A04222">
    <property type="entry name" value="VCBPF2"/>
</dbReference>
<dbReference type="SMR" id="P03611"/>
<dbReference type="GO" id="GO:0039617">
    <property type="term" value="C:T=3 icosahedral viral capsid"/>
    <property type="evidence" value="ECO:0007669"/>
    <property type="project" value="UniProtKB-KW"/>
</dbReference>
<dbReference type="GO" id="GO:0003723">
    <property type="term" value="F:RNA binding"/>
    <property type="evidence" value="ECO:0007669"/>
    <property type="project" value="UniProtKB-KW"/>
</dbReference>
<dbReference type="GO" id="GO:0005198">
    <property type="term" value="F:structural molecule activity"/>
    <property type="evidence" value="ECO:0007669"/>
    <property type="project" value="InterPro"/>
</dbReference>
<dbReference type="GO" id="GO:0006417">
    <property type="term" value="P:regulation of translation"/>
    <property type="evidence" value="ECO:0007669"/>
    <property type="project" value="UniProtKB-KW"/>
</dbReference>
<dbReference type="Gene3D" id="3.30.380.10">
    <property type="entry name" value="MS2 Viral Coat Protein"/>
    <property type="match status" value="1"/>
</dbReference>
<dbReference type="InterPro" id="IPR002703">
    <property type="entry name" value="Levivir_coat"/>
</dbReference>
<dbReference type="InterPro" id="IPR015954">
    <property type="entry name" value="Phage_RNA-type_capsid"/>
</dbReference>
<dbReference type="Pfam" id="PF01819">
    <property type="entry name" value="Levi_coat"/>
    <property type="match status" value="1"/>
</dbReference>
<dbReference type="SUPFAM" id="SSF55405">
    <property type="entry name" value="RNA bacteriophage capsid protein"/>
    <property type="match status" value="1"/>
</dbReference>
<sequence>ASNFTQFVLVNDGGTGNVTVAPSNFANGVAEWISSNSRSQAYKVTCSVRQSSAQNRKYTIKVEVPKVATQTVGGVELPVAAWRSYLNLELTIPIFATNSDCELIVKAMQGLLKDGNPIPSAIAANSGIY</sequence>
<organism>
    <name type="scientific">Enterobacteria phage f2</name>
    <name type="common">Bacteriophage f2</name>
    <dbReference type="NCBI Taxonomy" id="12016"/>
    <lineage>
        <taxon>Viruses</taxon>
        <taxon>Riboviria</taxon>
        <taxon>Orthornavirae</taxon>
        <taxon>Lenarviricota</taxon>
        <taxon>Leviviricetes</taxon>
        <taxon>Norzivirales</taxon>
        <taxon>Fiersviridae</taxon>
        <taxon>Emesvirus</taxon>
        <taxon>Emesvirus zinderi</taxon>
    </lineage>
</organism>
<organismHost>
    <name type="scientific">Escherichia coli</name>
    <dbReference type="NCBI Taxonomy" id="562"/>
</organismHost>
<accession>P03611</accession>
<name>CAPSD_BPF2</name>
<proteinExistence type="evidence at protein level"/>
<reference key="1">
    <citation type="journal article" date="1967" name="J. Biol. Chem.">
        <title>Amino acid sequence of the f-2 coat protein.</title>
        <authorList>
            <person name="Weber K."/>
            <person name="Konigsberg W."/>
        </authorList>
    </citation>
    <scope>PROTEIN SEQUENCE</scope>
</reference>
<reference key="2">
    <citation type="journal article" date="1971" name="Biochim. Biophys. Acta">
        <title>Sequences of RNA fragments from the bacteriophage f2 coat protein cistron which differ from their R17 counterparts.</title>
        <authorList>
            <person name="Nichols J.L."/>
            <person name="Robertson H.D."/>
        </authorList>
    </citation>
    <scope>NUCLEOTIDE SEQUENCE [GENOMIC RNA] OF 81-99</scope>
</reference>
<feature type="chain" id="PRO_0000164839" description="Capsid protein">
    <location>
        <begin position="1"/>
        <end position="129"/>
    </location>
</feature>
<feature type="region of interest" description="Viral RNA-binding" evidence="1">
    <location>
        <begin position="31"/>
        <end position="104"/>
    </location>
</feature>
<protein>
    <recommendedName>
        <fullName>Capsid protein</fullName>
        <shortName>CP</shortName>
    </recommendedName>
    <alternativeName>
        <fullName>Coat protein</fullName>
    </alternativeName>
</protein>